<dbReference type="EMBL" id="AB168927">
    <property type="protein sequence ID" value="BAE01028.1"/>
    <property type="molecule type" value="mRNA"/>
</dbReference>
<dbReference type="STRING" id="9541.ENSMFAP00000004316"/>
<dbReference type="eggNOG" id="KOG2765">
    <property type="taxonomic scope" value="Eukaryota"/>
</dbReference>
<dbReference type="Proteomes" id="UP000233100">
    <property type="component" value="Unplaced"/>
</dbReference>
<dbReference type="GO" id="GO:0016020">
    <property type="term" value="C:membrane"/>
    <property type="evidence" value="ECO:0007669"/>
    <property type="project" value="UniProtKB-SubCell"/>
</dbReference>
<dbReference type="PANTHER" id="PTHR23051:SF0">
    <property type="entry name" value="SOLUTE CARRIER FAMILY 35 MEMBER F5"/>
    <property type="match status" value="1"/>
</dbReference>
<dbReference type="PANTHER" id="PTHR23051">
    <property type="entry name" value="SOLUTE CARRIER FAMILY 35, MEMBER F5"/>
    <property type="match status" value="1"/>
</dbReference>
<dbReference type="SUPFAM" id="SSF103481">
    <property type="entry name" value="Multidrug resistance efflux transporter EmrE"/>
    <property type="match status" value="1"/>
</dbReference>
<keyword id="KW-0472">Membrane</keyword>
<keyword id="KW-0597">Phosphoprotein</keyword>
<keyword id="KW-1185">Reference proteome</keyword>
<keyword id="KW-0732">Signal</keyword>
<keyword id="KW-0812">Transmembrane</keyword>
<keyword id="KW-1133">Transmembrane helix</keyword>
<keyword id="KW-0813">Transport</keyword>
<feature type="signal peptide" evidence="2">
    <location>
        <begin position="1"/>
        <end position="33"/>
    </location>
</feature>
<feature type="chain" id="PRO_0000311957" description="Solute carrier family 35 member F5">
    <location>
        <begin position="34"/>
        <end position="432"/>
    </location>
</feature>
<feature type="transmembrane region" description="Helical" evidence="2">
    <location>
        <begin position="152"/>
        <end position="172"/>
    </location>
</feature>
<feature type="transmembrane region" description="Helical" evidence="2">
    <location>
        <begin position="177"/>
        <end position="197"/>
    </location>
</feature>
<feature type="transmembrane region" description="Helical" evidence="2">
    <location>
        <begin position="205"/>
        <end position="225"/>
    </location>
</feature>
<feature type="transmembrane region" description="Helical" evidence="2">
    <location>
        <begin position="236"/>
        <end position="256"/>
    </location>
</feature>
<feature type="transmembrane region" description="Helical" evidence="2">
    <location>
        <begin position="270"/>
        <end position="290"/>
    </location>
</feature>
<feature type="transmembrane region" description="Helical" evidence="2">
    <location>
        <begin position="304"/>
        <end position="324"/>
    </location>
</feature>
<feature type="transmembrane region" description="Helical" evidence="2">
    <location>
        <begin position="329"/>
        <end position="349"/>
    </location>
</feature>
<feature type="transmembrane region" description="Helical" evidence="2">
    <location>
        <begin position="361"/>
        <end position="381"/>
    </location>
</feature>
<feature type="domain" description="EamA">
    <location>
        <begin position="161"/>
        <end position="225"/>
    </location>
</feature>
<feature type="modified residue" description="Phosphoserine" evidence="1">
    <location>
        <position position="116"/>
    </location>
</feature>
<gene>
    <name type="primary">SLC35F5</name>
    <name type="ORF">QtsA-15855</name>
</gene>
<reference key="1">
    <citation type="submission" date="2005-06" db="EMBL/GenBank/DDBJ databases">
        <title>DNA sequences of macaque genes expressed in brain or testis and its evolutionary implications.</title>
        <authorList>
            <consortium name="International consortium for macaque cDNA sequencing and analysis"/>
        </authorList>
    </citation>
    <scope>NUCLEOTIDE SEQUENCE [LARGE SCALE MRNA]</scope>
    <source>
        <tissue>Testis</tissue>
    </source>
</reference>
<sequence length="432" mass="48339">MFLPSTTNHSSAPLQKHLCLFCTFWALLFGSHGDNSVQEDFAESMLLFFADAEGYFAACTTDTTMNSSLSEPLYVPVKFHDLPSEKPESTNIDTEKTPKKSRVRFSNIMEIRQLPSSHALEAKLSRMSYPVKEQESILKTVGKLTATQVAKISFFFCFVWFLANLSYQEALSDTQVAIVNILSSTSGLFTLILAAVFPSNSGDRFTLSKLLAVILSIGGVVLVNLSGSEKSAGRNTIGSIWSLAGAMLYAVYIVMIKRKVDREDKLDIPMFFGFVGLFNLLLLWPGFFLLHYTGFEDFEFPNKVVLMCIIINGLIGTVLSEFLWLWGCFLTSSLIGTLALSLTIPLSIIADMCMQKVQFSWLFFAGAIPVFFSFFIVTLLCHYNNWDPVMVGIRRIFAFICRKHRIQRVPEDSEQCESLISMHSVSQEDGAS</sequence>
<comment type="function">
    <text evidence="3">Putative solute transporter.</text>
</comment>
<comment type="subcellular location">
    <subcellularLocation>
        <location evidence="3">Membrane</location>
        <topology evidence="3">Multi-pass membrane protein</topology>
    </subcellularLocation>
</comment>
<comment type="similarity">
    <text evidence="3">Belongs to the SLC35F solute transporter family.</text>
</comment>
<evidence type="ECO:0000250" key="1">
    <source>
        <dbReference type="UniProtKB" id="Q8WV83"/>
    </source>
</evidence>
<evidence type="ECO:0000255" key="2"/>
<evidence type="ECO:0000305" key="3"/>
<name>S35F5_MACFA</name>
<accession>Q4R794</accession>
<organism>
    <name type="scientific">Macaca fascicularis</name>
    <name type="common">Crab-eating macaque</name>
    <name type="synonym">Cynomolgus monkey</name>
    <dbReference type="NCBI Taxonomy" id="9541"/>
    <lineage>
        <taxon>Eukaryota</taxon>
        <taxon>Metazoa</taxon>
        <taxon>Chordata</taxon>
        <taxon>Craniata</taxon>
        <taxon>Vertebrata</taxon>
        <taxon>Euteleostomi</taxon>
        <taxon>Mammalia</taxon>
        <taxon>Eutheria</taxon>
        <taxon>Euarchontoglires</taxon>
        <taxon>Primates</taxon>
        <taxon>Haplorrhini</taxon>
        <taxon>Catarrhini</taxon>
        <taxon>Cercopithecidae</taxon>
        <taxon>Cercopithecinae</taxon>
        <taxon>Macaca</taxon>
    </lineage>
</organism>
<protein>
    <recommendedName>
        <fullName>Solute carrier family 35 member F5</fullName>
    </recommendedName>
</protein>
<proteinExistence type="evidence at transcript level"/>